<dbReference type="EC" id="2.3.1.-" evidence="1"/>
<dbReference type="EMBL" id="BA000030">
    <property type="protein sequence ID" value="BAC71736.1"/>
    <property type="molecule type" value="Genomic_DNA"/>
</dbReference>
<dbReference type="RefSeq" id="WP_010985453.1">
    <property type="nucleotide sequence ID" value="NZ_JZJK01000060.1"/>
</dbReference>
<dbReference type="SMR" id="Q82G74"/>
<dbReference type="GeneID" id="41541088"/>
<dbReference type="KEGG" id="sma:SAVERM_4024"/>
<dbReference type="eggNOG" id="COG4552">
    <property type="taxonomic scope" value="Bacteria"/>
</dbReference>
<dbReference type="HOGENOM" id="CLU_050659_0_0_11"/>
<dbReference type="OrthoDB" id="8399956at2"/>
<dbReference type="Proteomes" id="UP000000428">
    <property type="component" value="Chromosome"/>
</dbReference>
<dbReference type="GO" id="GO:0034069">
    <property type="term" value="F:aminoglycoside N-acetyltransferase activity"/>
    <property type="evidence" value="ECO:0007669"/>
    <property type="project" value="TreeGrafter"/>
</dbReference>
<dbReference type="GO" id="GO:0030649">
    <property type="term" value="P:aminoglycoside antibiotic catabolic process"/>
    <property type="evidence" value="ECO:0007669"/>
    <property type="project" value="TreeGrafter"/>
</dbReference>
<dbReference type="FunFam" id="3.40.630.30:FF:000112">
    <property type="entry name" value="N-acetyltransferase Eis"/>
    <property type="match status" value="1"/>
</dbReference>
<dbReference type="FunFam" id="3.40.630.30:FF:000158">
    <property type="entry name" value="Uncharacterized N-acetyltransferase B9W62_25615"/>
    <property type="match status" value="1"/>
</dbReference>
<dbReference type="Gene3D" id="3.40.630.30">
    <property type="match status" value="2"/>
</dbReference>
<dbReference type="Gene3D" id="3.30.1050.10">
    <property type="entry name" value="SCP2 sterol-binding domain"/>
    <property type="match status" value="1"/>
</dbReference>
<dbReference type="HAMAP" id="MF_01812">
    <property type="entry name" value="Eis"/>
    <property type="match status" value="1"/>
</dbReference>
<dbReference type="InterPro" id="IPR041380">
    <property type="entry name" value="Acetyltransf_17"/>
</dbReference>
<dbReference type="InterPro" id="IPR051554">
    <property type="entry name" value="Acetyltransferase_Eis"/>
</dbReference>
<dbReference type="InterPro" id="IPR016181">
    <property type="entry name" value="Acyl_CoA_acyltransferase"/>
</dbReference>
<dbReference type="InterPro" id="IPR025559">
    <property type="entry name" value="Eis_dom"/>
</dbReference>
<dbReference type="InterPro" id="IPR000182">
    <property type="entry name" value="GNAT_dom"/>
</dbReference>
<dbReference type="InterPro" id="IPR022902">
    <property type="entry name" value="NAcTrfase_Eis"/>
</dbReference>
<dbReference type="InterPro" id="IPR036527">
    <property type="entry name" value="SCP2_sterol-bd_dom_sf"/>
</dbReference>
<dbReference type="NCBIfam" id="NF002367">
    <property type="entry name" value="PRK01346.1-4"/>
    <property type="match status" value="1"/>
</dbReference>
<dbReference type="PANTHER" id="PTHR37817">
    <property type="entry name" value="N-ACETYLTRANSFERASE EIS"/>
    <property type="match status" value="1"/>
</dbReference>
<dbReference type="PANTHER" id="PTHR37817:SF1">
    <property type="entry name" value="N-ACETYLTRANSFERASE EIS"/>
    <property type="match status" value="1"/>
</dbReference>
<dbReference type="Pfam" id="PF17668">
    <property type="entry name" value="Acetyltransf_17"/>
    <property type="match status" value="1"/>
</dbReference>
<dbReference type="Pfam" id="PF13527">
    <property type="entry name" value="Acetyltransf_9"/>
    <property type="match status" value="1"/>
</dbReference>
<dbReference type="Pfam" id="PF13530">
    <property type="entry name" value="SCP2_2"/>
    <property type="match status" value="1"/>
</dbReference>
<dbReference type="SUPFAM" id="SSF55729">
    <property type="entry name" value="Acyl-CoA N-acyltransferases (Nat)"/>
    <property type="match status" value="1"/>
</dbReference>
<dbReference type="SUPFAM" id="SSF55718">
    <property type="entry name" value="SCP-like"/>
    <property type="match status" value="1"/>
</dbReference>
<dbReference type="PROSITE" id="PS51186">
    <property type="entry name" value="GNAT"/>
    <property type="match status" value="1"/>
</dbReference>
<sequence length="418" mass="46001">MSRPDDIDVRPIAEAETADWIRALNTGFLRSPEVSEREVADRSSYLVPARTLGAFDNGRCVATFRSFPQELTAVGGASVPADAISNVTVTATHRRRGLLTRMMAQDLAAAKERGDVVATLIAAEYPIYGRYGFGAATHSTEWTIDVPRTGLDPRWSGPGDGGRIDLVDGEDVRKAGPELHERLRRTQPGAVSRDERWWQVHTGVVRLDRSPWTEPFYAVYRSASGEVEGLVSYECDDHWGDAKQPQNTAKVNWLIATTPAAERALWHYLCSIDWITKVRTGWRAPDDLLPHFLPDPRAARVTTHADWLWVRILDVVRALEARTYDGSGTLVLDVVDRHGLAGGRYRLTVGPDGAVCEPTTRDAGLTLDVGELAALWLGDASAVRLAALGRVREQQEGAASVADALLRTSGRPWCPDMF</sequence>
<evidence type="ECO:0000255" key="1">
    <source>
        <dbReference type="HAMAP-Rule" id="MF_01812"/>
    </source>
</evidence>
<name>Y4024_STRAW</name>
<feature type="chain" id="PRO_0000220263" description="Uncharacterized N-acetyltransferase SAV_4024">
    <location>
        <begin position="1"/>
        <end position="418"/>
    </location>
</feature>
<feature type="domain" description="N-acetyltransferase" evidence="1">
    <location>
        <begin position="7"/>
        <end position="158"/>
    </location>
</feature>
<feature type="active site" description="Proton donor" evidence="1">
    <location>
        <position position="128"/>
    </location>
</feature>
<feature type="active site" description="Proton acceptor; via carboxylate" evidence="1">
    <location>
        <position position="418"/>
    </location>
</feature>
<feature type="binding site" evidence="1">
    <location>
        <begin position="87"/>
        <end position="89"/>
    </location>
    <ligand>
        <name>acetyl-CoA</name>
        <dbReference type="ChEBI" id="CHEBI:57288"/>
    </ligand>
</feature>
<feature type="binding site" evidence="1">
    <location>
        <begin position="95"/>
        <end position="100"/>
    </location>
    <ligand>
        <name>acetyl-CoA</name>
        <dbReference type="ChEBI" id="CHEBI:57288"/>
    </ligand>
</feature>
<protein>
    <recommendedName>
        <fullName evidence="1">Uncharacterized N-acetyltransferase SAV_4024</fullName>
        <ecNumber evidence="1">2.3.1.-</ecNumber>
    </recommendedName>
</protein>
<reference key="1">
    <citation type="journal article" date="2001" name="Proc. Natl. Acad. Sci. U.S.A.">
        <title>Genome sequence of an industrial microorganism Streptomyces avermitilis: deducing the ability of producing secondary metabolites.</title>
        <authorList>
            <person name="Omura S."/>
            <person name="Ikeda H."/>
            <person name="Ishikawa J."/>
            <person name="Hanamoto A."/>
            <person name="Takahashi C."/>
            <person name="Shinose M."/>
            <person name="Takahashi Y."/>
            <person name="Horikawa H."/>
            <person name="Nakazawa H."/>
            <person name="Osonoe T."/>
            <person name="Kikuchi H."/>
            <person name="Shiba T."/>
            <person name="Sakaki Y."/>
            <person name="Hattori M."/>
        </authorList>
    </citation>
    <scope>NUCLEOTIDE SEQUENCE [LARGE SCALE GENOMIC DNA]</scope>
    <source>
        <strain>ATCC 31267 / DSM 46492 / JCM 5070 / NBRC 14893 / NCIMB 12804 / NRRL 8165 / MA-4680</strain>
    </source>
</reference>
<reference key="2">
    <citation type="journal article" date="2003" name="Nat. Biotechnol.">
        <title>Complete genome sequence and comparative analysis of the industrial microorganism Streptomyces avermitilis.</title>
        <authorList>
            <person name="Ikeda H."/>
            <person name="Ishikawa J."/>
            <person name="Hanamoto A."/>
            <person name="Shinose M."/>
            <person name="Kikuchi H."/>
            <person name="Shiba T."/>
            <person name="Sakaki Y."/>
            <person name="Hattori M."/>
            <person name="Omura S."/>
        </authorList>
    </citation>
    <scope>NUCLEOTIDE SEQUENCE [LARGE SCALE GENOMIC DNA]</scope>
    <source>
        <strain>ATCC 31267 / DSM 46492 / JCM 5070 / NBRC 14893 / NCIMB 12804 / NRRL 8165 / MA-4680</strain>
    </source>
</reference>
<keyword id="KW-0012">Acyltransferase</keyword>
<keyword id="KW-1185">Reference proteome</keyword>
<keyword id="KW-0808">Transferase</keyword>
<accession>Q82G74</accession>
<organism>
    <name type="scientific">Streptomyces avermitilis (strain ATCC 31267 / DSM 46492 / JCM 5070 / NBRC 14893 / NCIMB 12804 / NRRL 8165 / MA-4680)</name>
    <dbReference type="NCBI Taxonomy" id="227882"/>
    <lineage>
        <taxon>Bacteria</taxon>
        <taxon>Bacillati</taxon>
        <taxon>Actinomycetota</taxon>
        <taxon>Actinomycetes</taxon>
        <taxon>Kitasatosporales</taxon>
        <taxon>Streptomycetaceae</taxon>
        <taxon>Streptomyces</taxon>
    </lineage>
</organism>
<gene>
    <name type="ordered locus">SAV_4024</name>
</gene>
<proteinExistence type="inferred from homology"/>
<comment type="subunit">
    <text evidence="1">Homohexamer; trimer of dimers.</text>
</comment>
<comment type="similarity">
    <text>Belongs to the acetyltransferase Eis family.</text>
</comment>